<name>MED21_CAEEL</name>
<keyword id="KW-0010">Activator</keyword>
<keyword id="KW-0175">Coiled coil</keyword>
<keyword id="KW-0539">Nucleus</keyword>
<keyword id="KW-1185">Reference proteome</keyword>
<keyword id="KW-0804">Transcription</keyword>
<keyword id="KW-0805">Transcription regulation</keyword>
<reference key="1">
    <citation type="journal article" date="1998" name="Science">
        <title>Genome sequence of the nematode C. elegans: a platform for investigating biology.</title>
        <authorList>
            <consortium name="The C. elegans sequencing consortium"/>
        </authorList>
    </citation>
    <scope>NUCLEOTIDE SEQUENCE [LARGE SCALE GENOMIC DNA]</scope>
    <source>
        <strain>Bristol N2</strain>
    </source>
</reference>
<reference key="2">
    <citation type="journal article" date="1999" name="Proc. Natl. Acad. Sci. U.S.A.">
        <title>Caenorhabditis elegans mediator complexes are required for developmental-specific transcriptional activation.</title>
        <authorList>
            <person name="Kwon J.Y."/>
            <person name="Park J.M."/>
            <person name="Gim B.S."/>
            <person name="Han S.J."/>
            <person name="Lee J."/>
            <person name="Kim Y.-J."/>
        </authorList>
    </citation>
    <scope>INTERACTION WITH LET-49</scope>
</reference>
<gene>
    <name type="primary">mdt-21</name>
    <name type="ORF">C24H11.9</name>
</gene>
<dbReference type="EMBL" id="Z81475">
    <property type="protein sequence ID" value="CAH04698.1"/>
    <property type="molecule type" value="Genomic_DNA"/>
</dbReference>
<dbReference type="RefSeq" id="NP_001021184.1">
    <property type="nucleotide sequence ID" value="NM_001026013.3"/>
</dbReference>
<dbReference type="SMR" id="Q6BER6"/>
<dbReference type="BioGRID" id="532890">
    <property type="interactions" value="2"/>
</dbReference>
<dbReference type="FunCoup" id="Q6BER6">
    <property type="interactions" value="2085"/>
</dbReference>
<dbReference type="IntAct" id="Q6BER6">
    <property type="interactions" value="5"/>
</dbReference>
<dbReference type="STRING" id="6239.C24H11.9.1"/>
<dbReference type="PaxDb" id="6239-C24H11.9"/>
<dbReference type="PeptideAtlas" id="Q6BER6"/>
<dbReference type="EnsemblMetazoa" id="C24H11.9.1">
    <property type="protein sequence ID" value="C24H11.9.1"/>
    <property type="gene ID" value="WBGene00007704"/>
</dbReference>
<dbReference type="GeneID" id="3565572"/>
<dbReference type="KEGG" id="cel:CELE_C24H11.9"/>
<dbReference type="UCSC" id="C24H11.9">
    <property type="organism name" value="c. elegans"/>
</dbReference>
<dbReference type="AGR" id="WB:WBGene00007704"/>
<dbReference type="CTD" id="3565572"/>
<dbReference type="WormBase" id="C24H11.9">
    <property type="protein sequence ID" value="CE36687"/>
    <property type="gene ID" value="WBGene00007704"/>
    <property type="gene designation" value="mdt-21"/>
</dbReference>
<dbReference type="eggNOG" id="KOG1510">
    <property type="taxonomic scope" value="Eukaryota"/>
</dbReference>
<dbReference type="GeneTree" id="ENSGT00390000014557"/>
<dbReference type="HOGENOM" id="CLU_126757_0_0_1"/>
<dbReference type="InParanoid" id="Q6BER6"/>
<dbReference type="OMA" id="DSFPIEA"/>
<dbReference type="OrthoDB" id="526653at2759"/>
<dbReference type="PhylomeDB" id="Q6BER6"/>
<dbReference type="PRO" id="PR:Q6BER6"/>
<dbReference type="Proteomes" id="UP000001940">
    <property type="component" value="Chromosome III"/>
</dbReference>
<dbReference type="Bgee" id="WBGene00007704">
    <property type="expression patterns" value="Expressed in germ line (C elegans) and 4 other cell types or tissues"/>
</dbReference>
<dbReference type="GO" id="GO:0016592">
    <property type="term" value="C:mediator complex"/>
    <property type="evidence" value="ECO:0000318"/>
    <property type="project" value="GO_Central"/>
</dbReference>
<dbReference type="GO" id="GO:0003712">
    <property type="term" value="F:transcription coregulator activity"/>
    <property type="evidence" value="ECO:0000318"/>
    <property type="project" value="GO_Central"/>
</dbReference>
<dbReference type="GO" id="GO:0006357">
    <property type="term" value="P:regulation of transcription by RNA polymerase II"/>
    <property type="evidence" value="ECO:0000318"/>
    <property type="project" value="GO_Central"/>
</dbReference>
<dbReference type="Gene3D" id="6.10.280.10">
    <property type="entry name" value="Mediator complex, subunit Med21"/>
    <property type="match status" value="1"/>
</dbReference>
<dbReference type="InterPro" id="IPR037212">
    <property type="entry name" value="Med7/Med21-like"/>
</dbReference>
<dbReference type="InterPro" id="IPR021384">
    <property type="entry name" value="Mediator_Med21"/>
</dbReference>
<dbReference type="PANTHER" id="PTHR13381:SF0">
    <property type="entry name" value="MEDIATOR OF RNA POLYMERASE II TRANSCRIPTION SUBUNIT 21"/>
    <property type="match status" value="1"/>
</dbReference>
<dbReference type="PANTHER" id="PTHR13381">
    <property type="entry name" value="RNA POLYMERASE II HOLOENZYME COMPONENT SRB7"/>
    <property type="match status" value="1"/>
</dbReference>
<dbReference type="SUPFAM" id="SSF140718">
    <property type="entry name" value="Mediator hinge subcomplex-like"/>
    <property type="match status" value="1"/>
</dbReference>
<sequence length="130" mass="14135">MADRMTQLQDMINEMAGLMTNAIGVLQATAPPCEFGAISQELEDEPNCAIFAAGIAKAAKNIEILIDSFPIEAGNQEAEVEEKMIKNDEKQREKVNELVGLVGDSNRLVGVVQKKLAEISKTQMSSRPSE</sequence>
<proteinExistence type="evidence at protein level"/>
<feature type="chain" id="PRO_0000305951" description="Mediator of RNA polymerase II transcription subunit 21">
    <location>
        <begin position="1"/>
        <end position="130"/>
    </location>
</feature>
<feature type="coiled-coil region" evidence="2">
    <location>
        <begin position="71"/>
        <end position="99"/>
    </location>
</feature>
<comment type="function">
    <text evidence="1">Component of the Mediator complex, a coactivator involved in the regulated transcription of nearly all RNA polymerase II-dependent genes. Mediator functions as a bridge to convey information from gene-specific regulatory proteins to the basal RNA polymerase II transcription machinery. Mediator is recruited to promoters by direct interactions with regulatory proteins and serves as a scaffold for the assembly of a functional preinitiation complex with RNA polymerase II and the general transcription factors (By similarity).</text>
</comment>
<comment type="subunit">
    <text evidence="1 3">Component of the Mediator complex (By similarity). Interacts with let49/mdt-7.</text>
</comment>
<comment type="interaction">
    <interactant intactId="EBI-1533858">
        <id>Q6BER6</id>
    </interactant>
    <interactant intactId="EBI-1533863">
        <id>Q95Q17</id>
        <label>let-49</label>
    </interactant>
    <organismsDiffer>false</organismsDiffer>
    <experiments>2</experiments>
</comment>
<comment type="subcellular location">
    <subcellularLocation>
        <location evidence="4">Nucleus</location>
    </subcellularLocation>
</comment>
<comment type="similarity">
    <text evidence="4">Belongs to the Mediator complex subunit 21 family.</text>
</comment>
<organism>
    <name type="scientific">Caenorhabditis elegans</name>
    <dbReference type="NCBI Taxonomy" id="6239"/>
    <lineage>
        <taxon>Eukaryota</taxon>
        <taxon>Metazoa</taxon>
        <taxon>Ecdysozoa</taxon>
        <taxon>Nematoda</taxon>
        <taxon>Chromadorea</taxon>
        <taxon>Rhabditida</taxon>
        <taxon>Rhabditina</taxon>
        <taxon>Rhabditomorpha</taxon>
        <taxon>Rhabditoidea</taxon>
        <taxon>Rhabditidae</taxon>
        <taxon>Peloderinae</taxon>
        <taxon>Caenorhabditis</taxon>
    </lineage>
</organism>
<accession>Q6BER6</accession>
<protein>
    <recommendedName>
        <fullName>Mediator of RNA polymerase II transcription subunit 21</fullName>
    </recommendedName>
    <alternativeName>
        <fullName>CeSRB7</fullName>
    </alternativeName>
    <alternativeName>
        <fullName>Mediator complex subunit 21</fullName>
    </alternativeName>
</protein>
<evidence type="ECO:0000250" key="1"/>
<evidence type="ECO:0000255" key="2"/>
<evidence type="ECO:0000269" key="3">
    <source>
    </source>
</evidence>
<evidence type="ECO:0000305" key="4"/>